<keyword id="KW-0963">Cytoplasm</keyword>
<keyword id="KW-0456">Lyase</keyword>
<keyword id="KW-0704">Schiff base</keyword>
<protein>
    <recommendedName>
        <fullName evidence="1">Deoxyribose-phosphate aldolase</fullName>
        <shortName evidence="1">DERA</shortName>
        <ecNumber evidence="1">4.1.2.4</ecNumber>
    </recommendedName>
    <alternativeName>
        <fullName evidence="1">2-deoxy-D-ribose 5-phosphate aldolase</fullName>
    </alternativeName>
    <alternativeName>
        <fullName evidence="1">Phosphodeoxyriboaldolase</fullName>
        <shortName evidence="1">Deoxyriboaldolase</shortName>
    </alternativeName>
</protein>
<proteinExistence type="inferred from homology"/>
<reference key="1">
    <citation type="submission" date="2007-06" db="EMBL/GenBank/DDBJ databases">
        <authorList>
            <person name="Brinkac L.M."/>
            <person name="Daugherty S."/>
            <person name="Dodson R.J."/>
            <person name="Madupu R."/>
            <person name="Brown J.L."/>
            <person name="Bruce D."/>
            <person name="Detter C."/>
            <person name="Munk C."/>
            <person name="Smith L.A."/>
            <person name="Smith T.J."/>
            <person name="White O."/>
            <person name="Brettin T.S."/>
        </authorList>
    </citation>
    <scope>NUCLEOTIDE SEQUENCE [LARGE SCALE GENOMIC DNA]</scope>
    <source>
        <strain>Langeland / NCTC 10281 / Type F</strain>
    </source>
</reference>
<dbReference type="EC" id="4.1.2.4" evidence="1"/>
<dbReference type="EMBL" id="CP000728">
    <property type="protein sequence ID" value="ABS39739.1"/>
    <property type="molecule type" value="Genomic_DNA"/>
</dbReference>
<dbReference type="RefSeq" id="WP_012099667.1">
    <property type="nucleotide sequence ID" value="NC_009699.1"/>
</dbReference>
<dbReference type="SMR" id="A7GDP8"/>
<dbReference type="KEGG" id="cbf:CLI_1645"/>
<dbReference type="HOGENOM" id="CLU_053595_0_1_9"/>
<dbReference type="UniPathway" id="UPA00002">
    <property type="reaction ID" value="UER00468"/>
</dbReference>
<dbReference type="Proteomes" id="UP000002410">
    <property type="component" value="Chromosome"/>
</dbReference>
<dbReference type="GO" id="GO:0005737">
    <property type="term" value="C:cytoplasm"/>
    <property type="evidence" value="ECO:0007669"/>
    <property type="project" value="UniProtKB-SubCell"/>
</dbReference>
<dbReference type="GO" id="GO:0004139">
    <property type="term" value="F:deoxyribose-phosphate aldolase activity"/>
    <property type="evidence" value="ECO:0007669"/>
    <property type="project" value="UniProtKB-UniRule"/>
</dbReference>
<dbReference type="GO" id="GO:0006018">
    <property type="term" value="P:2-deoxyribose 1-phosphate catabolic process"/>
    <property type="evidence" value="ECO:0007669"/>
    <property type="project" value="UniProtKB-UniRule"/>
</dbReference>
<dbReference type="GO" id="GO:0016052">
    <property type="term" value="P:carbohydrate catabolic process"/>
    <property type="evidence" value="ECO:0007669"/>
    <property type="project" value="TreeGrafter"/>
</dbReference>
<dbReference type="GO" id="GO:0009264">
    <property type="term" value="P:deoxyribonucleotide catabolic process"/>
    <property type="evidence" value="ECO:0007669"/>
    <property type="project" value="InterPro"/>
</dbReference>
<dbReference type="CDD" id="cd00959">
    <property type="entry name" value="DeoC"/>
    <property type="match status" value="1"/>
</dbReference>
<dbReference type="FunFam" id="3.20.20.70:FF:000044">
    <property type="entry name" value="Deoxyribose-phosphate aldolase"/>
    <property type="match status" value="1"/>
</dbReference>
<dbReference type="Gene3D" id="3.20.20.70">
    <property type="entry name" value="Aldolase class I"/>
    <property type="match status" value="1"/>
</dbReference>
<dbReference type="HAMAP" id="MF_00114">
    <property type="entry name" value="DeoC_type1"/>
    <property type="match status" value="1"/>
</dbReference>
<dbReference type="InterPro" id="IPR013785">
    <property type="entry name" value="Aldolase_TIM"/>
</dbReference>
<dbReference type="InterPro" id="IPR011343">
    <property type="entry name" value="DeoC"/>
</dbReference>
<dbReference type="InterPro" id="IPR002915">
    <property type="entry name" value="DeoC/FbaB/LacD_aldolase"/>
</dbReference>
<dbReference type="InterPro" id="IPR028581">
    <property type="entry name" value="DeoC_typeI"/>
</dbReference>
<dbReference type="NCBIfam" id="TIGR00126">
    <property type="entry name" value="deoC"/>
    <property type="match status" value="1"/>
</dbReference>
<dbReference type="PANTHER" id="PTHR10889">
    <property type="entry name" value="DEOXYRIBOSE-PHOSPHATE ALDOLASE"/>
    <property type="match status" value="1"/>
</dbReference>
<dbReference type="PANTHER" id="PTHR10889:SF1">
    <property type="entry name" value="DEOXYRIBOSE-PHOSPHATE ALDOLASE"/>
    <property type="match status" value="1"/>
</dbReference>
<dbReference type="Pfam" id="PF01791">
    <property type="entry name" value="DeoC"/>
    <property type="match status" value="1"/>
</dbReference>
<dbReference type="PIRSF" id="PIRSF001357">
    <property type="entry name" value="DeoC"/>
    <property type="match status" value="1"/>
</dbReference>
<dbReference type="SMART" id="SM01133">
    <property type="entry name" value="DeoC"/>
    <property type="match status" value="1"/>
</dbReference>
<dbReference type="SUPFAM" id="SSF51569">
    <property type="entry name" value="Aldolase"/>
    <property type="match status" value="1"/>
</dbReference>
<name>DEOC_CLOBL</name>
<accession>A7GDP8</accession>
<gene>
    <name evidence="1" type="primary">deoC</name>
    <name type="ordered locus">CLI_1645</name>
</gene>
<comment type="function">
    <text evidence="1">Catalyzes a reversible aldol reaction between acetaldehyde and D-glyceraldehyde 3-phosphate to generate 2-deoxy-D-ribose 5-phosphate.</text>
</comment>
<comment type="catalytic activity">
    <reaction evidence="1">
        <text>2-deoxy-D-ribose 5-phosphate = D-glyceraldehyde 3-phosphate + acetaldehyde</text>
        <dbReference type="Rhea" id="RHEA:12821"/>
        <dbReference type="ChEBI" id="CHEBI:15343"/>
        <dbReference type="ChEBI" id="CHEBI:59776"/>
        <dbReference type="ChEBI" id="CHEBI:62877"/>
        <dbReference type="EC" id="4.1.2.4"/>
    </reaction>
</comment>
<comment type="pathway">
    <text evidence="1">Carbohydrate degradation; 2-deoxy-D-ribose 1-phosphate degradation; D-glyceraldehyde 3-phosphate and acetaldehyde from 2-deoxy-alpha-D-ribose 1-phosphate: step 2/2.</text>
</comment>
<comment type="subcellular location">
    <subcellularLocation>
        <location evidence="1">Cytoplasm</location>
    </subcellularLocation>
</comment>
<comment type="similarity">
    <text evidence="1">Belongs to the DeoC/FbaB aldolase family. DeoC type 1 subfamily.</text>
</comment>
<evidence type="ECO:0000255" key="1">
    <source>
        <dbReference type="HAMAP-Rule" id="MF_00114"/>
    </source>
</evidence>
<feature type="chain" id="PRO_1000057750" description="Deoxyribose-phosphate aldolase">
    <location>
        <begin position="1"/>
        <end position="212"/>
    </location>
</feature>
<feature type="active site" description="Proton donor/acceptor" evidence="1">
    <location>
        <position position="89"/>
    </location>
</feature>
<feature type="active site" description="Schiff-base intermediate with acetaldehyde" evidence="1">
    <location>
        <position position="151"/>
    </location>
</feature>
<feature type="active site" description="Proton donor/acceptor" evidence="1">
    <location>
        <position position="180"/>
    </location>
</feature>
<organism>
    <name type="scientific">Clostridium botulinum (strain Langeland / NCTC 10281 / Type F)</name>
    <dbReference type="NCBI Taxonomy" id="441772"/>
    <lineage>
        <taxon>Bacteria</taxon>
        <taxon>Bacillati</taxon>
        <taxon>Bacillota</taxon>
        <taxon>Clostridia</taxon>
        <taxon>Eubacteriales</taxon>
        <taxon>Clostridiaceae</taxon>
        <taxon>Clostridium</taxon>
    </lineage>
</organism>
<sequence>MKLSKYIDHTLLKPQATEKDILKLIEEAKTYDFASVCVNPSWVKLAYENLKDTDVKVCTVVGFPLGATSTASKVYETKVAIEDGADEIDMVISVGQLKSGNDEYVKEEIKKIVEASKNKLVKVIIETCLLTEEEKVKACTLSKEAGADYVKTSTGFSTGGAKPEDIKLMRETVGKDMGVKASGGIHTKEEMEAMIENGATRIGASCGVQLVR</sequence>